<name>ASSY_SALTI</name>
<dbReference type="EC" id="6.3.4.5"/>
<dbReference type="EMBL" id="AL513382">
    <property type="protein sequence ID" value="CAD07809.1"/>
    <property type="status" value="ALT_INIT"/>
    <property type="molecule type" value="Genomic_DNA"/>
</dbReference>
<dbReference type="EMBL" id="AE014613">
    <property type="protein sequence ID" value="AAO70745.1"/>
    <property type="status" value="ALT_INIT"/>
    <property type="molecule type" value="Genomic_DNA"/>
</dbReference>
<dbReference type="PIR" id="AC0902">
    <property type="entry name" value="AC0902"/>
</dbReference>
<dbReference type="RefSeq" id="NP_457671.3">
    <property type="nucleotide sequence ID" value="NC_003198.1"/>
</dbReference>
<dbReference type="RefSeq" id="WP_000207645.1">
    <property type="nucleotide sequence ID" value="NZ_WSUR01000003.1"/>
</dbReference>
<dbReference type="SMR" id="Q8Z3H5"/>
<dbReference type="STRING" id="220341.gene:17587321"/>
<dbReference type="KEGG" id="stt:t3208"/>
<dbReference type="KEGG" id="sty:STY3470"/>
<dbReference type="PATRIC" id="fig|220341.7.peg.3532"/>
<dbReference type="eggNOG" id="COG0137">
    <property type="taxonomic scope" value="Bacteria"/>
</dbReference>
<dbReference type="HOGENOM" id="CLU_032784_4_1_6"/>
<dbReference type="OMA" id="WRWTVSP"/>
<dbReference type="UniPathway" id="UPA00068">
    <property type="reaction ID" value="UER00113"/>
</dbReference>
<dbReference type="Proteomes" id="UP000000541">
    <property type="component" value="Chromosome"/>
</dbReference>
<dbReference type="Proteomes" id="UP000002670">
    <property type="component" value="Chromosome"/>
</dbReference>
<dbReference type="GO" id="GO:0005737">
    <property type="term" value="C:cytoplasm"/>
    <property type="evidence" value="ECO:0007669"/>
    <property type="project" value="UniProtKB-SubCell"/>
</dbReference>
<dbReference type="GO" id="GO:0004055">
    <property type="term" value="F:argininosuccinate synthase activity"/>
    <property type="evidence" value="ECO:0007669"/>
    <property type="project" value="UniProtKB-UniRule"/>
</dbReference>
<dbReference type="GO" id="GO:0005524">
    <property type="term" value="F:ATP binding"/>
    <property type="evidence" value="ECO:0007669"/>
    <property type="project" value="UniProtKB-UniRule"/>
</dbReference>
<dbReference type="GO" id="GO:0042803">
    <property type="term" value="F:protein homodimerization activity"/>
    <property type="evidence" value="ECO:0007669"/>
    <property type="project" value="InterPro"/>
</dbReference>
<dbReference type="GO" id="GO:0000053">
    <property type="term" value="P:argininosuccinate metabolic process"/>
    <property type="evidence" value="ECO:0007669"/>
    <property type="project" value="TreeGrafter"/>
</dbReference>
<dbReference type="GO" id="GO:0006526">
    <property type="term" value="P:L-arginine biosynthetic process"/>
    <property type="evidence" value="ECO:0007669"/>
    <property type="project" value="UniProtKB-UniRule"/>
</dbReference>
<dbReference type="GO" id="GO:0000050">
    <property type="term" value="P:urea cycle"/>
    <property type="evidence" value="ECO:0007669"/>
    <property type="project" value="TreeGrafter"/>
</dbReference>
<dbReference type="CDD" id="cd01999">
    <property type="entry name" value="ASS"/>
    <property type="match status" value="1"/>
</dbReference>
<dbReference type="FunFam" id="1.10.287.400:FF:000001">
    <property type="entry name" value="Argininosuccinate synthase"/>
    <property type="match status" value="1"/>
</dbReference>
<dbReference type="Gene3D" id="1.10.287.400">
    <property type="match status" value="1"/>
</dbReference>
<dbReference type="Gene3D" id="3.90.1260.10">
    <property type="entry name" value="Argininosuccinate synthetase, chain A, domain 2"/>
    <property type="match status" value="1"/>
</dbReference>
<dbReference type="Gene3D" id="3.40.50.620">
    <property type="entry name" value="HUPs"/>
    <property type="match status" value="1"/>
</dbReference>
<dbReference type="HAMAP" id="MF_00581">
    <property type="entry name" value="Arg_succ_synth_type2"/>
    <property type="match status" value="1"/>
</dbReference>
<dbReference type="InterPro" id="IPR023437">
    <property type="entry name" value="Arg_succ_synth_type2_subfam"/>
</dbReference>
<dbReference type="InterPro" id="IPR048268">
    <property type="entry name" value="Arginosuc_syn_C"/>
</dbReference>
<dbReference type="InterPro" id="IPR048267">
    <property type="entry name" value="Arginosuc_syn_N"/>
</dbReference>
<dbReference type="InterPro" id="IPR001518">
    <property type="entry name" value="Arginosuc_synth"/>
</dbReference>
<dbReference type="InterPro" id="IPR018223">
    <property type="entry name" value="Arginosuc_synth_CS"/>
</dbReference>
<dbReference type="InterPro" id="IPR023434">
    <property type="entry name" value="Arginosuc_synth_type_1_subfam"/>
</dbReference>
<dbReference type="InterPro" id="IPR024074">
    <property type="entry name" value="AS_cat/multimer_dom_body"/>
</dbReference>
<dbReference type="InterPro" id="IPR024073">
    <property type="entry name" value="AS_multimer_C_tail"/>
</dbReference>
<dbReference type="InterPro" id="IPR014729">
    <property type="entry name" value="Rossmann-like_a/b/a_fold"/>
</dbReference>
<dbReference type="NCBIfam" id="TIGR00032">
    <property type="entry name" value="argG"/>
    <property type="match status" value="1"/>
</dbReference>
<dbReference type="NCBIfam" id="NF003779">
    <property type="entry name" value="PRK05370.1"/>
    <property type="match status" value="1"/>
</dbReference>
<dbReference type="PANTHER" id="PTHR11587">
    <property type="entry name" value="ARGININOSUCCINATE SYNTHASE"/>
    <property type="match status" value="1"/>
</dbReference>
<dbReference type="PANTHER" id="PTHR11587:SF2">
    <property type="entry name" value="ARGININOSUCCINATE SYNTHASE"/>
    <property type="match status" value="1"/>
</dbReference>
<dbReference type="Pfam" id="PF20979">
    <property type="entry name" value="Arginosuc_syn_C"/>
    <property type="match status" value="1"/>
</dbReference>
<dbReference type="Pfam" id="PF00764">
    <property type="entry name" value="Arginosuc_synth"/>
    <property type="match status" value="1"/>
</dbReference>
<dbReference type="SUPFAM" id="SSF52402">
    <property type="entry name" value="Adenine nucleotide alpha hydrolases-like"/>
    <property type="match status" value="1"/>
</dbReference>
<dbReference type="SUPFAM" id="SSF69864">
    <property type="entry name" value="Argininosuccinate synthetase, C-terminal domain"/>
    <property type="match status" value="1"/>
</dbReference>
<dbReference type="PROSITE" id="PS00564">
    <property type="entry name" value="ARGININOSUCCIN_SYN_1"/>
    <property type="match status" value="1"/>
</dbReference>
<dbReference type="PROSITE" id="PS00565">
    <property type="entry name" value="ARGININOSUCCIN_SYN_2"/>
    <property type="match status" value="1"/>
</dbReference>
<gene>
    <name type="primary">argG</name>
    <name type="ordered locus">STY3470</name>
    <name type="ordered locus">t3208</name>
</gene>
<feature type="initiator methionine" description="Removed" evidence="1">
    <location>
        <position position="1"/>
    </location>
</feature>
<feature type="chain" id="PRO_0000148705" description="Argininosuccinate synthase">
    <location>
        <begin position="2"/>
        <end position="447"/>
    </location>
</feature>
<feature type="binding site" evidence="1">
    <location>
        <begin position="17"/>
        <end position="25"/>
    </location>
    <ligand>
        <name>ATP</name>
        <dbReference type="ChEBI" id="CHEBI:30616"/>
    </ligand>
</feature>
<feature type="binding site" evidence="1">
    <location>
        <position position="43"/>
    </location>
    <ligand>
        <name>ATP</name>
        <dbReference type="ChEBI" id="CHEBI:30616"/>
    </ligand>
</feature>
<feature type="binding site" evidence="1">
    <location>
        <position position="99"/>
    </location>
    <ligand>
        <name>L-citrulline</name>
        <dbReference type="ChEBI" id="CHEBI:57743"/>
    </ligand>
</feature>
<feature type="binding site" evidence="1">
    <location>
        <position position="129"/>
    </location>
    <ligand>
        <name>ATP</name>
        <dbReference type="ChEBI" id="CHEBI:30616"/>
    </ligand>
</feature>
<feature type="binding site" evidence="1">
    <location>
        <position position="131"/>
    </location>
    <ligand>
        <name>ATP</name>
        <dbReference type="ChEBI" id="CHEBI:30616"/>
    </ligand>
</feature>
<feature type="binding site" evidence="1">
    <location>
        <position position="131"/>
    </location>
    <ligand>
        <name>L-aspartate</name>
        <dbReference type="ChEBI" id="CHEBI:29991"/>
    </ligand>
</feature>
<feature type="binding site" evidence="1">
    <location>
        <position position="135"/>
    </location>
    <ligand>
        <name>L-aspartate</name>
        <dbReference type="ChEBI" id="CHEBI:29991"/>
    </ligand>
</feature>
<feature type="binding site" evidence="1">
    <location>
        <position position="135"/>
    </location>
    <ligand>
        <name>L-citrulline</name>
        <dbReference type="ChEBI" id="CHEBI:57743"/>
    </ligand>
</feature>
<feature type="binding site" evidence="1">
    <location>
        <position position="136"/>
    </location>
    <ligand>
        <name>ATP</name>
        <dbReference type="ChEBI" id="CHEBI:30616"/>
    </ligand>
</feature>
<feature type="binding site" evidence="1">
    <location>
        <position position="136"/>
    </location>
    <ligand>
        <name>L-aspartate</name>
        <dbReference type="ChEBI" id="CHEBI:29991"/>
    </ligand>
</feature>
<feature type="binding site" evidence="1">
    <location>
        <position position="139"/>
    </location>
    <ligand>
        <name>L-citrulline</name>
        <dbReference type="ChEBI" id="CHEBI:57743"/>
    </ligand>
</feature>
<feature type="binding site" evidence="1">
    <location>
        <position position="192"/>
    </location>
    <ligand>
        <name>L-citrulline</name>
        <dbReference type="ChEBI" id="CHEBI:57743"/>
    </ligand>
</feature>
<feature type="binding site" evidence="1">
    <location>
        <position position="194"/>
    </location>
    <ligand>
        <name>ATP</name>
        <dbReference type="ChEBI" id="CHEBI:30616"/>
    </ligand>
</feature>
<feature type="binding site" evidence="1">
    <location>
        <position position="201"/>
    </location>
    <ligand>
        <name>L-citrulline</name>
        <dbReference type="ChEBI" id="CHEBI:57743"/>
    </ligand>
</feature>
<feature type="binding site" evidence="1">
    <location>
        <position position="203"/>
    </location>
    <ligand>
        <name>L-citrulline</name>
        <dbReference type="ChEBI" id="CHEBI:57743"/>
    </ligand>
</feature>
<feature type="binding site" evidence="1">
    <location>
        <position position="280"/>
    </location>
    <ligand>
        <name>L-citrulline</name>
        <dbReference type="ChEBI" id="CHEBI:57743"/>
    </ligand>
</feature>
<feature type="sequence conflict" description="In Ref. 2; AAO70745." evidence="2" ref="2">
    <original>A</original>
    <variation>T</variation>
    <location>
        <position position="84"/>
    </location>
</feature>
<organism>
    <name type="scientific">Salmonella typhi</name>
    <dbReference type="NCBI Taxonomy" id="90370"/>
    <lineage>
        <taxon>Bacteria</taxon>
        <taxon>Pseudomonadati</taxon>
        <taxon>Pseudomonadota</taxon>
        <taxon>Gammaproteobacteria</taxon>
        <taxon>Enterobacterales</taxon>
        <taxon>Enterobacteriaceae</taxon>
        <taxon>Salmonella</taxon>
    </lineage>
</organism>
<accession>Q8Z3H5</accession>
<proteinExistence type="inferred from homology"/>
<reference key="1">
    <citation type="journal article" date="2001" name="Nature">
        <title>Complete genome sequence of a multiple drug resistant Salmonella enterica serovar Typhi CT18.</title>
        <authorList>
            <person name="Parkhill J."/>
            <person name="Dougan G."/>
            <person name="James K.D."/>
            <person name="Thomson N.R."/>
            <person name="Pickard D."/>
            <person name="Wain J."/>
            <person name="Churcher C.M."/>
            <person name="Mungall K.L."/>
            <person name="Bentley S.D."/>
            <person name="Holden M.T.G."/>
            <person name="Sebaihia M."/>
            <person name="Baker S."/>
            <person name="Basham D."/>
            <person name="Brooks K."/>
            <person name="Chillingworth T."/>
            <person name="Connerton P."/>
            <person name="Cronin A."/>
            <person name="Davis P."/>
            <person name="Davies R.M."/>
            <person name="Dowd L."/>
            <person name="White N."/>
            <person name="Farrar J."/>
            <person name="Feltwell T."/>
            <person name="Hamlin N."/>
            <person name="Haque A."/>
            <person name="Hien T.T."/>
            <person name="Holroyd S."/>
            <person name="Jagels K."/>
            <person name="Krogh A."/>
            <person name="Larsen T.S."/>
            <person name="Leather S."/>
            <person name="Moule S."/>
            <person name="O'Gaora P."/>
            <person name="Parry C."/>
            <person name="Quail M.A."/>
            <person name="Rutherford K.M."/>
            <person name="Simmonds M."/>
            <person name="Skelton J."/>
            <person name="Stevens K."/>
            <person name="Whitehead S."/>
            <person name="Barrell B.G."/>
        </authorList>
    </citation>
    <scope>NUCLEOTIDE SEQUENCE [LARGE SCALE GENOMIC DNA]</scope>
    <source>
        <strain>CT18</strain>
    </source>
</reference>
<reference key="2">
    <citation type="journal article" date="2003" name="J. Bacteriol.">
        <title>Comparative genomics of Salmonella enterica serovar Typhi strains Ty2 and CT18.</title>
        <authorList>
            <person name="Deng W."/>
            <person name="Liou S.-R."/>
            <person name="Plunkett G. III"/>
            <person name="Mayhew G.F."/>
            <person name="Rose D.J."/>
            <person name="Burland V."/>
            <person name="Kodoyianni V."/>
            <person name="Schwartz D.C."/>
            <person name="Blattner F.R."/>
        </authorList>
    </citation>
    <scope>NUCLEOTIDE SEQUENCE [LARGE SCALE GENOMIC DNA]</scope>
    <source>
        <strain>ATCC 700931 / Ty2</strain>
    </source>
</reference>
<keyword id="KW-0028">Amino-acid biosynthesis</keyword>
<keyword id="KW-0055">Arginine biosynthesis</keyword>
<keyword id="KW-0067">ATP-binding</keyword>
<keyword id="KW-0963">Cytoplasm</keyword>
<keyword id="KW-0436">Ligase</keyword>
<keyword id="KW-0547">Nucleotide-binding</keyword>
<evidence type="ECO:0000250" key="1"/>
<evidence type="ECO:0000305" key="2"/>
<comment type="catalytic activity">
    <reaction>
        <text>L-citrulline + L-aspartate + ATP = 2-(N(omega)-L-arginino)succinate + AMP + diphosphate + H(+)</text>
        <dbReference type="Rhea" id="RHEA:10932"/>
        <dbReference type="ChEBI" id="CHEBI:15378"/>
        <dbReference type="ChEBI" id="CHEBI:29991"/>
        <dbReference type="ChEBI" id="CHEBI:30616"/>
        <dbReference type="ChEBI" id="CHEBI:33019"/>
        <dbReference type="ChEBI" id="CHEBI:57472"/>
        <dbReference type="ChEBI" id="CHEBI:57743"/>
        <dbReference type="ChEBI" id="CHEBI:456215"/>
        <dbReference type="EC" id="6.3.4.5"/>
    </reaction>
</comment>
<comment type="pathway">
    <text>Amino-acid biosynthesis; L-arginine biosynthesis; L-arginine from L-ornithine and carbamoyl phosphate: step 2/3.</text>
</comment>
<comment type="subunit">
    <text evidence="1">Homotetramer.</text>
</comment>
<comment type="subcellular location">
    <subcellularLocation>
        <location evidence="1">Cytoplasm</location>
    </subcellularLocation>
</comment>
<comment type="similarity">
    <text evidence="2">Belongs to the argininosuccinate synthase family. Type 2 subfamily.</text>
</comment>
<comment type="sequence caution" evidence="2">
    <conflict type="erroneous initiation">
        <sequence resource="EMBL-CDS" id="AAO70745"/>
    </conflict>
</comment>
<comment type="sequence caution" evidence="2">
    <conflict type="erroneous initiation">
        <sequence resource="EMBL-CDS" id="CAD07809"/>
    </conflict>
</comment>
<sequence length="447" mass="49798">MTTILKHLPAGQRIGIAFSGGLDTSAALLWMRQKGAVPYAYTANLGQPDEDDYDAIPRRAMEYGAENARLIDCRKQLVAEGIAAIQCGAFHNTTGGLTYFNTTPLGRAVTGTMLVAAMKEDGVNIWGDGSTYKGNDIERFYRYGLLTNAELQIYKPWLDTDFIDELGGRHEMSEFMIACGFDYKMSVEKAYSTDSNMLGATHEAKDLEFLNSSVKIVNPIMGVKFWDESVKIPAEEVTVRFEQGHPVALNGKTFSDDVEMMLEANRIGGRHGLGMSDQIENRIIEAKSRGIYEAPGMALLHIAYERLLTGIHNEDTIEQYHSHGRQLGKLLYQGRWFDSQALMLRDGLQRWVASQITGEVTLELRRGNDYSILNTVSDNLTYKAERLTMEKGESVFSPDDRIGQLTMRNLDITDTREKLFGYAKAGLLTASSATGLPQVENLENKAK</sequence>
<protein>
    <recommendedName>
        <fullName>Argininosuccinate synthase</fullName>
        <ecNumber>6.3.4.5</ecNumber>
    </recommendedName>
    <alternativeName>
        <fullName>Citrulline--aspartate ligase</fullName>
    </alternativeName>
</protein>